<proteinExistence type="inferred from homology"/>
<protein>
    <recommendedName>
        <fullName evidence="1">Trans-aconitate 2-methyltransferase</fullName>
        <ecNumber evidence="1">2.1.1.144</ecNumber>
    </recommendedName>
</protein>
<gene>
    <name evidence="1" type="primary">tam</name>
    <name type="ordered locus">PSPA7_2668</name>
</gene>
<name>TAM_PSEP7</name>
<comment type="function">
    <text evidence="1">Catalyzes the S-adenosylmethionine monomethyl esterification of trans-aconitate.</text>
</comment>
<comment type="catalytic activity">
    <reaction evidence="1">
        <text>trans-aconitate + S-adenosyl-L-methionine = (E)-3-(methoxycarbonyl)pent-2-enedioate + S-adenosyl-L-homocysteine</text>
        <dbReference type="Rhea" id="RHEA:14969"/>
        <dbReference type="ChEBI" id="CHEBI:15708"/>
        <dbReference type="ChEBI" id="CHEBI:57470"/>
        <dbReference type="ChEBI" id="CHEBI:57856"/>
        <dbReference type="ChEBI" id="CHEBI:59789"/>
        <dbReference type="EC" id="2.1.1.144"/>
    </reaction>
</comment>
<comment type="subcellular location">
    <subcellularLocation>
        <location evidence="1">Cytoplasm</location>
    </subcellularLocation>
</comment>
<comment type="similarity">
    <text evidence="1">Belongs to the methyltransferase superfamily. Tam family.</text>
</comment>
<keyword id="KW-0963">Cytoplasm</keyword>
<keyword id="KW-0489">Methyltransferase</keyword>
<keyword id="KW-0949">S-adenosyl-L-methionine</keyword>
<keyword id="KW-0808">Transferase</keyword>
<dbReference type="EC" id="2.1.1.144" evidence="1"/>
<dbReference type="EMBL" id="CP000744">
    <property type="protein sequence ID" value="ABR84604.1"/>
    <property type="molecule type" value="Genomic_DNA"/>
</dbReference>
<dbReference type="RefSeq" id="WP_012075509.1">
    <property type="nucleotide sequence ID" value="NC_009656.1"/>
</dbReference>
<dbReference type="SMR" id="A6V4P3"/>
<dbReference type="KEGG" id="pap:PSPA7_2668"/>
<dbReference type="HOGENOM" id="CLU_037990_5_2_6"/>
<dbReference type="Proteomes" id="UP000001582">
    <property type="component" value="Chromosome"/>
</dbReference>
<dbReference type="GO" id="GO:0005737">
    <property type="term" value="C:cytoplasm"/>
    <property type="evidence" value="ECO:0007669"/>
    <property type="project" value="UniProtKB-SubCell"/>
</dbReference>
<dbReference type="GO" id="GO:0030798">
    <property type="term" value="F:trans-aconitate 2-methyltransferase activity"/>
    <property type="evidence" value="ECO:0007669"/>
    <property type="project" value="UniProtKB-UniRule"/>
</dbReference>
<dbReference type="GO" id="GO:0032259">
    <property type="term" value="P:methylation"/>
    <property type="evidence" value="ECO:0007669"/>
    <property type="project" value="UniProtKB-KW"/>
</dbReference>
<dbReference type="CDD" id="cd02440">
    <property type="entry name" value="AdoMet_MTases"/>
    <property type="match status" value="1"/>
</dbReference>
<dbReference type="Gene3D" id="1.10.150.290">
    <property type="entry name" value="S-adenosyl-L-methionine-dependent methyltransferases"/>
    <property type="match status" value="1"/>
</dbReference>
<dbReference type="Gene3D" id="3.40.50.150">
    <property type="entry name" value="Vaccinia Virus protein VP39"/>
    <property type="match status" value="1"/>
</dbReference>
<dbReference type="HAMAP" id="MF_00560">
    <property type="entry name" value="Tran_acon_Me_trans"/>
    <property type="match status" value="1"/>
</dbReference>
<dbReference type="InterPro" id="IPR041698">
    <property type="entry name" value="Methyltransf_25"/>
</dbReference>
<dbReference type="InterPro" id="IPR029063">
    <property type="entry name" value="SAM-dependent_MTases_sf"/>
</dbReference>
<dbReference type="InterPro" id="IPR023506">
    <property type="entry name" value="Trans-aconitate_MeTrfase"/>
</dbReference>
<dbReference type="InterPro" id="IPR023149">
    <property type="entry name" value="Trans_acon_MeTrfase_C"/>
</dbReference>
<dbReference type="PANTHER" id="PTHR43861:SF1">
    <property type="entry name" value="TRANS-ACONITATE 2-METHYLTRANSFERASE"/>
    <property type="match status" value="1"/>
</dbReference>
<dbReference type="PANTHER" id="PTHR43861">
    <property type="entry name" value="TRANS-ACONITATE 2-METHYLTRANSFERASE-RELATED"/>
    <property type="match status" value="1"/>
</dbReference>
<dbReference type="Pfam" id="PF13649">
    <property type="entry name" value="Methyltransf_25"/>
    <property type="match status" value="1"/>
</dbReference>
<dbReference type="SUPFAM" id="SSF53335">
    <property type="entry name" value="S-adenosyl-L-methionine-dependent methyltransferases"/>
    <property type="match status" value="1"/>
</dbReference>
<evidence type="ECO:0000255" key="1">
    <source>
        <dbReference type="HAMAP-Rule" id="MF_00560"/>
    </source>
</evidence>
<accession>A6V4P3</accession>
<sequence>MVRDDLRCRAGNETHWDPTAYMQFARLRQRPVVELLDHVDLYSPERIYDLGCGTGIATELLARRWPQAELHGVDSSAEMLEEAARLPIRASWERANLQHWCAERPASLLFAAAVLHFIERHCSLLPRLLGQLSPGGCLAAHMPNWRDASWYRLMLDALDSAGPGGTPLGSPTLRYLMQQRNVLSLDNYYRLLAPLCAEVDIWETEHLQVVDGNDPIFDWVKVSALRPVLGELDEEARRRFLDRYLDLLHRYYPQELDGRTLFPFRRVFVVASLRR</sequence>
<organism>
    <name type="scientific">Pseudomonas paraeruginosa (strain DSM 24068 / PA7)</name>
    <name type="common">Pseudomonas aeruginosa (strain PA7)</name>
    <dbReference type="NCBI Taxonomy" id="381754"/>
    <lineage>
        <taxon>Bacteria</taxon>
        <taxon>Pseudomonadati</taxon>
        <taxon>Pseudomonadota</taxon>
        <taxon>Gammaproteobacteria</taxon>
        <taxon>Pseudomonadales</taxon>
        <taxon>Pseudomonadaceae</taxon>
        <taxon>Pseudomonas</taxon>
        <taxon>Pseudomonas paraeruginosa</taxon>
    </lineage>
</organism>
<reference key="1">
    <citation type="submission" date="2007-06" db="EMBL/GenBank/DDBJ databases">
        <authorList>
            <person name="Dodson R.J."/>
            <person name="Harkins D."/>
            <person name="Paulsen I.T."/>
        </authorList>
    </citation>
    <scope>NUCLEOTIDE SEQUENCE [LARGE SCALE GENOMIC DNA]</scope>
    <source>
        <strain>DSM 24068 / PA7</strain>
    </source>
</reference>
<feature type="chain" id="PRO_1000056571" description="Trans-aconitate 2-methyltransferase">
    <location>
        <begin position="1"/>
        <end position="275"/>
    </location>
</feature>